<sequence>MMIKQETIGYMTLKSDAAKIEALLTKQFDALCLSQCPIIEEIIDTQLFGFTKEVDFAKRVRLISDQEGSQLVNELETRINQLYLEIYQTQAQNEVHRN</sequence>
<comment type="similarity">
    <text evidence="1">Belongs to the UPF0358 family.</text>
</comment>
<organism>
    <name type="scientific">Latilactobacillus sakei subsp. sakei (strain 23K)</name>
    <name type="common">Lactobacillus sakei subsp. sakei</name>
    <dbReference type="NCBI Taxonomy" id="314315"/>
    <lineage>
        <taxon>Bacteria</taxon>
        <taxon>Bacillati</taxon>
        <taxon>Bacillota</taxon>
        <taxon>Bacilli</taxon>
        <taxon>Lactobacillales</taxon>
        <taxon>Lactobacillaceae</taxon>
        <taxon>Latilactobacillus</taxon>
    </lineage>
</organism>
<protein>
    <recommendedName>
        <fullName evidence="1">UPF0358 protein LCA_1078</fullName>
    </recommendedName>
</protein>
<evidence type="ECO:0000255" key="1">
    <source>
        <dbReference type="HAMAP-Rule" id="MF_01560"/>
    </source>
</evidence>
<dbReference type="EMBL" id="CR936503">
    <property type="protein sequence ID" value="CAI55379.1"/>
    <property type="molecule type" value="Genomic_DNA"/>
</dbReference>
<dbReference type="RefSeq" id="WP_011374778.1">
    <property type="nucleotide sequence ID" value="NC_007576.1"/>
</dbReference>
<dbReference type="SMR" id="Q38WQ2"/>
<dbReference type="STRING" id="314315.LCA_1078"/>
<dbReference type="KEGG" id="lsa:LCA_1078"/>
<dbReference type="eggNOG" id="COG4838">
    <property type="taxonomic scope" value="Bacteria"/>
</dbReference>
<dbReference type="HOGENOM" id="CLU_160493_1_0_9"/>
<dbReference type="OrthoDB" id="2135235at2"/>
<dbReference type="Proteomes" id="UP000002707">
    <property type="component" value="Chromosome"/>
</dbReference>
<dbReference type="Gene3D" id="1.10.287.750">
    <property type="entry name" value="SO2669-like"/>
    <property type="match status" value="1"/>
</dbReference>
<dbReference type="HAMAP" id="MF_01560">
    <property type="entry name" value="UPF0358"/>
    <property type="match status" value="1"/>
</dbReference>
<dbReference type="InterPro" id="IPR009983">
    <property type="entry name" value="UPF0358"/>
</dbReference>
<dbReference type="InterPro" id="IPR036270">
    <property type="entry name" value="UPF0358_sf"/>
</dbReference>
<dbReference type="NCBIfam" id="NF010187">
    <property type="entry name" value="PRK13666.1"/>
    <property type="match status" value="1"/>
</dbReference>
<dbReference type="Pfam" id="PF07408">
    <property type="entry name" value="DUF1507"/>
    <property type="match status" value="1"/>
</dbReference>
<dbReference type="SUPFAM" id="SSF140404">
    <property type="entry name" value="EF2458-like"/>
    <property type="match status" value="1"/>
</dbReference>
<keyword id="KW-1185">Reference proteome</keyword>
<reference key="1">
    <citation type="journal article" date="2005" name="Nat. Biotechnol.">
        <title>The complete genome sequence of the meat-borne lactic acid bacterium Lactobacillus sakei 23K.</title>
        <authorList>
            <person name="Chaillou S."/>
            <person name="Champomier-Verges M.-C."/>
            <person name="Cornet M."/>
            <person name="Crutz-Le Coq A.-M."/>
            <person name="Dudez A.-M."/>
            <person name="Martin V."/>
            <person name="Beaufils S."/>
            <person name="Darbon-Rongere E."/>
            <person name="Bossy R."/>
            <person name="Loux V."/>
            <person name="Zagorec M."/>
        </authorList>
    </citation>
    <scope>NUCLEOTIDE SEQUENCE [LARGE SCALE GENOMIC DNA]</scope>
    <source>
        <strain>23K</strain>
    </source>
</reference>
<accession>Q38WQ2</accession>
<name>Y1078_LATSS</name>
<gene>
    <name type="ordered locus">LCA_1078</name>
</gene>
<feature type="chain" id="PRO_0000110646" description="UPF0358 protein LCA_1078">
    <location>
        <begin position="1"/>
        <end position="98"/>
    </location>
</feature>
<proteinExistence type="inferred from homology"/>